<gene>
    <name evidence="1" type="primary">pax8</name>
    <name evidence="10" type="synonym">pax-8</name>
</gene>
<name>PAX8_XENLA</name>
<reference evidence="9 10" key="1">
    <citation type="journal article" date="1999" name="Dev. Biol.">
        <title>Synergism between Pax-8 and lim-1 in embryonic kidney development.</title>
        <authorList>
            <person name="Carroll T.J."/>
            <person name="Vize P.D."/>
        </authorList>
    </citation>
    <scope>NUCLEOTIDE SEQUENCE [MRNA] (ISOFORM 1)</scope>
    <scope>FUNCTION</scope>
    <scope>TISSUE SPECIFICITY</scope>
    <source>
        <tissue evidence="5">Embryo</tissue>
    </source>
</reference>
<reference evidence="9 11" key="2">
    <citation type="journal article" date="1999" name="Dev. Genet.">
        <title>Xenopus Pax-2/5/8 orthologues: novel insights into Pax gene evolution and identification of Pax-8 as the earliest marker for otic and pronephric cell lineages.</title>
        <authorList>
            <person name="Heller N."/>
            <person name="Braendli A.W."/>
        </authorList>
    </citation>
    <scope>NUCLEOTIDE SEQUENCE [MRNA] OF 222-465 (ISOFORMS 1 AND 2)</scope>
    <scope>ALTERNATIVE SPLICING</scope>
    <scope>TISSUE SPECIFICITY</scope>
    <scope>INDUCTION</scope>
    <source>
        <tissue evidence="11">Kidney</tissue>
    </source>
</reference>
<reference evidence="9" key="3">
    <citation type="journal article" date="2004" name="Dev. Biol.">
        <title>Molecular anatomy of placode development in Xenopus laevis.</title>
        <authorList>
            <person name="Schlosser G."/>
            <person name="Ahrens K."/>
        </authorList>
    </citation>
    <scope>TISSUE SPECIFICITY</scope>
</reference>
<reference evidence="9" key="4">
    <citation type="journal article" date="2006" name="Dev. Biol.">
        <title>Retinoic acid signalling is required for specification of pronephric cell fate.</title>
        <authorList>
            <person name="Cartry J."/>
            <person name="Nichane M."/>
            <person name="Ribes V."/>
            <person name="Colas A."/>
            <person name="Riou J.-F."/>
            <person name="Pieler T."/>
            <person name="Dolle P."/>
            <person name="Bellefroid E.J."/>
            <person name="Umbhauer M."/>
        </authorList>
    </citation>
    <scope>INDUCTION</scope>
</reference>
<comment type="function">
    <text evidence="5">Probable transcription factor. Involved in kidney development, acting synergistically with lhx1/lim-1 to establish the pronephric primordium in late gastrulae/early neurulae.</text>
</comment>
<comment type="subcellular location">
    <subcellularLocation>
        <location evidence="1 2">Nucleus</location>
    </subcellularLocation>
</comment>
<comment type="alternative products">
    <event type="alternative splicing"/>
    <isoform>
        <id>Q9PUK5-1</id>
        <name evidence="4 5">1</name>
        <sequence type="displayed"/>
    </isoform>
    <isoform>
        <id>Q9PUK5-2</id>
        <name evidence="4">2</name>
        <sequence type="described" ref="VSP_052378"/>
    </isoform>
</comment>
<comment type="tissue specificity">
    <text evidence="4 5 6">Expression starts at late gastrula stages in cells fated to become the primordia of the otic system and the pronephric kidney. Expression is maintained in these two structures through late tailbud stages. Does not appear to be expressed in the thyroid gland.</text>
</comment>
<comment type="induction">
    <text evidence="4 7">By retinoic acid in combination with activin.</text>
</comment>
<evidence type="ECO:0000250" key="1">
    <source>
        <dbReference type="UniProtKB" id="Q06710"/>
    </source>
</evidence>
<evidence type="ECO:0000255" key="2">
    <source>
        <dbReference type="PROSITE-ProRule" id="PRU00381"/>
    </source>
</evidence>
<evidence type="ECO:0000256" key="3">
    <source>
        <dbReference type="SAM" id="MobiDB-lite"/>
    </source>
</evidence>
<evidence type="ECO:0000269" key="4">
    <source>
    </source>
</evidence>
<evidence type="ECO:0000269" key="5">
    <source>
    </source>
</evidence>
<evidence type="ECO:0000269" key="6">
    <source>
    </source>
</evidence>
<evidence type="ECO:0000269" key="7">
    <source>
    </source>
</evidence>
<evidence type="ECO:0000303" key="8">
    <source>
    </source>
</evidence>
<evidence type="ECO:0000305" key="9"/>
<evidence type="ECO:0000312" key="10">
    <source>
        <dbReference type="EMBL" id="AAD52681.1"/>
    </source>
</evidence>
<evidence type="ECO:0000312" key="11">
    <source>
        <dbReference type="EMBL" id="CAA09231.1"/>
    </source>
</evidence>
<organism>
    <name type="scientific">Xenopus laevis</name>
    <name type="common">African clawed frog</name>
    <dbReference type="NCBI Taxonomy" id="8355"/>
    <lineage>
        <taxon>Eukaryota</taxon>
        <taxon>Metazoa</taxon>
        <taxon>Chordata</taxon>
        <taxon>Craniata</taxon>
        <taxon>Vertebrata</taxon>
        <taxon>Euteleostomi</taxon>
        <taxon>Amphibia</taxon>
        <taxon>Batrachia</taxon>
        <taxon>Anura</taxon>
        <taxon>Pipoidea</taxon>
        <taxon>Pipidae</taxon>
        <taxon>Xenopodinae</taxon>
        <taxon>Xenopus</taxon>
        <taxon>Xenopus</taxon>
    </lineage>
</organism>
<keyword id="KW-0025">Alternative splicing</keyword>
<keyword id="KW-0217">Developmental protein</keyword>
<keyword id="KW-0238">DNA-binding</keyword>
<keyword id="KW-0539">Nucleus</keyword>
<keyword id="KW-0563">Paired box</keyword>
<keyword id="KW-1185">Reference proteome</keyword>
<keyword id="KW-0709">Segmentation polarity protein</keyword>
<keyword id="KW-0804">Transcription</keyword>
<keyword id="KW-0805">Transcription regulation</keyword>
<sequence>MPNSSIRSELTTERGFSGPASNFNIGHGGLNQLGGAFVNGRPLPEVVRQRIVDLAHQGVRPCDISRQLRVSHGCVSKILGRYYETGSIRPGVIGGSKPKVATPKVVEKIGDYKRQNPTMFAWEIRDRLLTDGVCDNDTVPSVSSINRIIRTKVQQLFNLPMESCVKSLSPGQTLIPSSTVTPPESPHSDSLGSTYSISGLLGITQPSADGKRKLDDSDQESCRLSIDSQGSVGISRKQLRTEAYGHHPLDALECHFQRQHFPESYSSSTHSKTEQALYTLPLLNISLDDGKSSLTSTNTTIGRNLSTHQGYSALSEFTAFSIKQEASDSSSASSTPSSLCSPTFLDLQPINSGCSAPSFSAFSHPSVYGQFTSHVASGRDVVGATLPGYPPHIPSGQGNYASSAIAGMVAAGGDYSANAYSHGAYAAYGDSWRFPSSSLLGSPYYYSSGTRTAPPPTTAGAYDLM</sequence>
<accession>Q9PUK5</accession>
<accession>Q9YH94</accession>
<proteinExistence type="evidence at transcript level"/>
<dbReference type="EMBL" id="AF179301">
    <property type="protein sequence ID" value="AAD52681.1"/>
    <property type="molecule type" value="mRNA"/>
</dbReference>
<dbReference type="EMBL" id="AJ010504">
    <property type="protein sequence ID" value="CAA09231.1"/>
    <property type="molecule type" value="mRNA"/>
</dbReference>
<dbReference type="RefSeq" id="NP_001081941.1">
    <molecule id="Q9PUK5-1"/>
    <property type="nucleotide sequence ID" value="NM_001088472.1"/>
</dbReference>
<dbReference type="SMR" id="Q9PUK5"/>
<dbReference type="GeneID" id="398132"/>
<dbReference type="KEGG" id="xla:398132"/>
<dbReference type="AGR" id="Xenbase:XB-GENE-865008"/>
<dbReference type="CTD" id="398132"/>
<dbReference type="Xenbase" id="XB-GENE-865008">
    <property type="gene designation" value="pax8.L"/>
</dbReference>
<dbReference type="OrthoDB" id="3225452at2759"/>
<dbReference type="Proteomes" id="UP000186698">
    <property type="component" value="Chromosome 3L"/>
</dbReference>
<dbReference type="GO" id="GO:0005654">
    <property type="term" value="C:nucleoplasm"/>
    <property type="evidence" value="ECO:0000250"/>
    <property type="project" value="UniProtKB"/>
</dbReference>
<dbReference type="GO" id="GO:0000981">
    <property type="term" value="F:DNA-binding transcription factor activity, RNA polymerase II-specific"/>
    <property type="evidence" value="ECO:0000318"/>
    <property type="project" value="GO_Central"/>
</dbReference>
<dbReference type="GO" id="GO:0000978">
    <property type="term" value="F:RNA polymerase II cis-regulatory region sequence-specific DNA binding"/>
    <property type="evidence" value="ECO:0000318"/>
    <property type="project" value="GO_Central"/>
</dbReference>
<dbReference type="GO" id="GO:0000976">
    <property type="term" value="F:transcription cis-regulatory region binding"/>
    <property type="evidence" value="ECO:0000250"/>
    <property type="project" value="UniProtKB"/>
</dbReference>
<dbReference type="GO" id="GO:0071300">
    <property type="term" value="P:cellular response to retinoic acid"/>
    <property type="evidence" value="ECO:0000270"/>
    <property type="project" value="UniProtKB"/>
</dbReference>
<dbReference type="GO" id="GO:1900218">
    <property type="term" value="P:negative regulation of apoptotic process involved in metanephric nephron tubule development"/>
    <property type="evidence" value="ECO:0000250"/>
    <property type="project" value="UniProtKB"/>
</dbReference>
<dbReference type="GO" id="GO:1900212">
    <property type="term" value="P:negative regulation of mesenchymal cell apoptotic process involved in metanephros development"/>
    <property type="evidence" value="ECO:0000250"/>
    <property type="project" value="UniProtKB"/>
</dbReference>
<dbReference type="GO" id="GO:0007399">
    <property type="term" value="P:nervous system development"/>
    <property type="evidence" value="ECO:0000318"/>
    <property type="project" value="GO_Central"/>
</dbReference>
<dbReference type="GO" id="GO:0045893">
    <property type="term" value="P:positive regulation of DNA-templated transcription"/>
    <property type="evidence" value="ECO:0000250"/>
    <property type="project" value="UniProtKB"/>
</dbReference>
<dbReference type="GO" id="GO:2000611">
    <property type="term" value="P:positive regulation of thyroid hormone generation"/>
    <property type="evidence" value="ECO:0000250"/>
    <property type="project" value="UniProtKB"/>
</dbReference>
<dbReference type="GO" id="GO:0039003">
    <property type="term" value="P:pronephric field specification"/>
    <property type="evidence" value="ECO:0000316"/>
    <property type="project" value="UniProtKB"/>
</dbReference>
<dbReference type="GO" id="GO:0039020">
    <property type="term" value="P:pronephric nephron tubule development"/>
    <property type="evidence" value="ECO:0000316"/>
    <property type="project" value="UniProtKB"/>
</dbReference>
<dbReference type="GO" id="GO:0048793">
    <property type="term" value="P:pronephros development"/>
    <property type="evidence" value="ECO:0000250"/>
    <property type="project" value="UniProtKB"/>
</dbReference>
<dbReference type="GO" id="GO:0042981">
    <property type="term" value="P:regulation of apoptotic process"/>
    <property type="evidence" value="ECO:0000250"/>
    <property type="project" value="UniProtKB"/>
</dbReference>
<dbReference type="GO" id="GO:0035565">
    <property type="term" value="P:regulation of pronephros size"/>
    <property type="evidence" value="ECO:0000316"/>
    <property type="project" value="UniProtKB"/>
</dbReference>
<dbReference type="GO" id="GO:0006357">
    <property type="term" value="P:regulation of transcription by RNA polymerase II"/>
    <property type="evidence" value="ECO:0000318"/>
    <property type="project" value="GO_Central"/>
</dbReference>
<dbReference type="GO" id="GO:0007367">
    <property type="term" value="P:segment polarity determination"/>
    <property type="evidence" value="ECO:0007669"/>
    <property type="project" value="UniProtKB-KW"/>
</dbReference>
<dbReference type="GO" id="GO:0007423">
    <property type="term" value="P:sensory organ development"/>
    <property type="evidence" value="ECO:0000318"/>
    <property type="project" value="GO_Central"/>
</dbReference>
<dbReference type="GO" id="GO:0001655">
    <property type="term" value="P:urogenital system development"/>
    <property type="evidence" value="ECO:0000250"/>
    <property type="project" value="UniProtKB"/>
</dbReference>
<dbReference type="CDD" id="cd00131">
    <property type="entry name" value="PAX"/>
    <property type="match status" value="1"/>
</dbReference>
<dbReference type="FunFam" id="1.10.10.10:FF:000013">
    <property type="entry name" value="Paired box 8 isoform 1"/>
    <property type="match status" value="1"/>
</dbReference>
<dbReference type="FunFam" id="1.10.10.10:FF:000003">
    <property type="entry name" value="Paired box protein Pax-6"/>
    <property type="match status" value="1"/>
</dbReference>
<dbReference type="Gene3D" id="1.10.10.10">
    <property type="entry name" value="Winged helix-like DNA-binding domain superfamily/Winged helix DNA-binding domain"/>
    <property type="match status" value="2"/>
</dbReference>
<dbReference type="InterPro" id="IPR009057">
    <property type="entry name" value="Homeodomain-like_sf"/>
</dbReference>
<dbReference type="InterPro" id="IPR043182">
    <property type="entry name" value="PAIRED_DNA-bd_dom"/>
</dbReference>
<dbReference type="InterPro" id="IPR001523">
    <property type="entry name" value="Paired_dom"/>
</dbReference>
<dbReference type="InterPro" id="IPR022130">
    <property type="entry name" value="Pax2_C"/>
</dbReference>
<dbReference type="InterPro" id="IPR043565">
    <property type="entry name" value="PAX_fam"/>
</dbReference>
<dbReference type="InterPro" id="IPR036388">
    <property type="entry name" value="WH-like_DNA-bd_sf"/>
</dbReference>
<dbReference type="PANTHER" id="PTHR45636">
    <property type="entry name" value="PAIRED BOX PROTEIN PAX-6-RELATED-RELATED"/>
    <property type="match status" value="1"/>
</dbReference>
<dbReference type="PANTHER" id="PTHR45636:SF6">
    <property type="entry name" value="PAIRED BOX PROTEIN PAX-8"/>
    <property type="match status" value="1"/>
</dbReference>
<dbReference type="Pfam" id="PF00292">
    <property type="entry name" value="PAX"/>
    <property type="match status" value="1"/>
</dbReference>
<dbReference type="Pfam" id="PF12403">
    <property type="entry name" value="Pax2_C"/>
    <property type="match status" value="1"/>
</dbReference>
<dbReference type="PRINTS" id="PR00027">
    <property type="entry name" value="PAIREDBOX"/>
</dbReference>
<dbReference type="SMART" id="SM00351">
    <property type="entry name" value="PAX"/>
    <property type="match status" value="1"/>
</dbReference>
<dbReference type="SUPFAM" id="SSF46689">
    <property type="entry name" value="Homeodomain-like"/>
    <property type="match status" value="1"/>
</dbReference>
<dbReference type="PROSITE" id="PS00034">
    <property type="entry name" value="PAIRED_1"/>
    <property type="match status" value="1"/>
</dbReference>
<dbReference type="PROSITE" id="PS51057">
    <property type="entry name" value="PAIRED_2"/>
    <property type="match status" value="1"/>
</dbReference>
<protein>
    <recommendedName>
        <fullName>Paired box protein Pax-8</fullName>
        <shortName>XPax-8</shortName>
    </recommendedName>
</protein>
<feature type="chain" id="PRO_0000284703" description="Paired box protein Pax-8">
    <location>
        <begin position="1"/>
        <end position="465"/>
    </location>
</feature>
<feature type="DNA-binding region" description="Paired" evidence="2">
    <location>
        <begin position="26"/>
        <end position="152"/>
    </location>
</feature>
<feature type="region of interest" description="PAI subdomain" evidence="2">
    <location>
        <begin position="29"/>
        <end position="85"/>
    </location>
</feature>
<feature type="region of interest" description="RED subdomain" evidence="2">
    <location>
        <begin position="104"/>
        <end position="152"/>
    </location>
</feature>
<feature type="region of interest" description="Disordered" evidence="3">
    <location>
        <begin position="206"/>
        <end position="227"/>
    </location>
</feature>
<feature type="splice variant" id="VSP_052378" description="In isoform 2." evidence="8">
    <location>
        <begin position="316"/>
        <end position="377"/>
    </location>
</feature>
<feature type="sequence conflict" description="In Ref. 2; CAA09231." evidence="9" ref="2">
    <original>I</original>
    <variation>N</variation>
    <location>
        <position position="285"/>
    </location>
</feature>
<feature type="sequence conflict" description="In Ref. 2; CAA09231." evidence="9" ref="2">
    <original>N</original>
    <variation>S</variation>
    <location>
        <position position="351"/>
    </location>
</feature>
<feature type="sequence conflict" description="In Ref. 2; CAA09231." evidence="9" ref="2">
    <original>G</original>
    <variation>A</variation>
    <location>
        <position position="449"/>
    </location>
</feature>